<gene>
    <name type="primary">cysK</name>
    <name type="ordered locus">SA0471</name>
</gene>
<protein>
    <recommendedName>
        <fullName>Cysteine synthase</fullName>
        <shortName>CSase</shortName>
        <ecNumber>2.5.1.47</ecNumber>
    </recommendedName>
    <alternativeName>
        <fullName>O-acetylserine (thiol)-lyase</fullName>
        <shortName>OAS-TL</shortName>
    </alternativeName>
    <alternativeName>
        <fullName>O-acetylserine sulfhydrylase</fullName>
    </alternativeName>
</protein>
<feature type="chain" id="PRO_0000167097" description="Cysteine synthase">
    <location>
        <begin position="1"/>
        <end position="310"/>
    </location>
</feature>
<feature type="binding site" evidence="1">
    <location>
        <position position="76"/>
    </location>
    <ligand>
        <name>pyridoxal 5'-phosphate</name>
        <dbReference type="ChEBI" id="CHEBI:597326"/>
    </ligand>
</feature>
<feature type="binding site" evidence="1">
    <location>
        <begin position="180"/>
        <end position="184"/>
    </location>
    <ligand>
        <name>pyridoxal 5'-phosphate</name>
        <dbReference type="ChEBI" id="CHEBI:597326"/>
    </ligand>
</feature>
<feature type="binding site" evidence="1">
    <location>
        <position position="268"/>
    </location>
    <ligand>
        <name>pyridoxal 5'-phosphate</name>
        <dbReference type="ChEBI" id="CHEBI:597326"/>
    </ligand>
</feature>
<feature type="modified residue" description="N6-(pyridoxal phosphate)lysine" evidence="1">
    <location>
        <position position="46"/>
    </location>
</feature>
<dbReference type="EC" id="2.5.1.47"/>
<dbReference type="EMBL" id="BA000018">
    <property type="protein sequence ID" value="BAB41701.1"/>
    <property type="molecule type" value="Genomic_DNA"/>
</dbReference>
<dbReference type="PIR" id="B89818">
    <property type="entry name" value="B89818"/>
</dbReference>
<dbReference type="RefSeq" id="WP_000057594.1">
    <property type="nucleotide sequence ID" value="NC_002745.2"/>
</dbReference>
<dbReference type="SMR" id="P63871"/>
<dbReference type="EnsemblBacteria" id="BAB41701">
    <property type="protein sequence ID" value="BAB41701"/>
    <property type="gene ID" value="BAB41701"/>
</dbReference>
<dbReference type="KEGG" id="sau:SA0471"/>
<dbReference type="HOGENOM" id="CLU_021018_1_0_9"/>
<dbReference type="UniPathway" id="UPA00136">
    <property type="reaction ID" value="UER00200"/>
</dbReference>
<dbReference type="GO" id="GO:0004124">
    <property type="term" value="F:cysteine synthase activity"/>
    <property type="evidence" value="ECO:0007669"/>
    <property type="project" value="UniProtKB-EC"/>
</dbReference>
<dbReference type="GO" id="GO:0006535">
    <property type="term" value="P:cysteine biosynthetic process from serine"/>
    <property type="evidence" value="ECO:0007669"/>
    <property type="project" value="InterPro"/>
</dbReference>
<dbReference type="CDD" id="cd01561">
    <property type="entry name" value="CBS_like"/>
    <property type="match status" value="1"/>
</dbReference>
<dbReference type="FunFam" id="3.40.50.1100:FF:000003">
    <property type="entry name" value="Cystathionine beta-synthase"/>
    <property type="match status" value="1"/>
</dbReference>
<dbReference type="FunFam" id="3.40.50.1100:FF:000118">
    <property type="entry name" value="Related to CYS4-cystathionine beta-synthase"/>
    <property type="match status" value="1"/>
</dbReference>
<dbReference type="Gene3D" id="3.40.50.1100">
    <property type="match status" value="2"/>
</dbReference>
<dbReference type="InterPro" id="IPR005856">
    <property type="entry name" value="Cys_synth"/>
</dbReference>
<dbReference type="InterPro" id="IPR050214">
    <property type="entry name" value="Cys_Synth/Cystath_Beta-Synth"/>
</dbReference>
<dbReference type="InterPro" id="IPR005859">
    <property type="entry name" value="CysK"/>
</dbReference>
<dbReference type="InterPro" id="IPR001216">
    <property type="entry name" value="P-phosphate_BS"/>
</dbReference>
<dbReference type="InterPro" id="IPR001926">
    <property type="entry name" value="TrpB-like_PALP"/>
</dbReference>
<dbReference type="InterPro" id="IPR036052">
    <property type="entry name" value="TrpB-like_PALP_sf"/>
</dbReference>
<dbReference type="NCBIfam" id="TIGR01139">
    <property type="entry name" value="cysK"/>
    <property type="match status" value="1"/>
</dbReference>
<dbReference type="NCBIfam" id="TIGR01136">
    <property type="entry name" value="cysKM"/>
    <property type="match status" value="1"/>
</dbReference>
<dbReference type="PANTHER" id="PTHR10314">
    <property type="entry name" value="CYSTATHIONINE BETA-SYNTHASE"/>
    <property type="match status" value="1"/>
</dbReference>
<dbReference type="Pfam" id="PF00291">
    <property type="entry name" value="PALP"/>
    <property type="match status" value="1"/>
</dbReference>
<dbReference type="SUPFAM" id="SSF53686">
    <property type="entry name" value="Tryptophan synthase beta subunit-like PLP-dependent enzymes"/>
    <property type="match status" value="1"/>
</dbReference>
<dbReference type="PROSITE" id="PS00901">
    <property type="entry name" value="CYS_SYNTHASE"/>
    <property type="match status" value="1"/>
</dbReference>
<evidence type="ECO:0000250" key="1"/>
<evidence type="ECO:0000305" key="2"/>
<sequence>MAQKPVDNITQIIGGTPVVKLRNVVDDNAADVYVKLEYQNPGGSVKDRIALAMIEKAEREGKIKPGDTIVEPTSGNTGIGLAFVCAAKGYKAVFTMPETMSQERRNLLKAYGAELVLTPGSEAMKGAIKKAKELKEEHGYFEPQQFENPANPEVHELTTGPELLQQFEGKTIDAFLAGVGTGGTLSGVGKVLKKEYPNIEIVAIEPEASPVLSGGEPGPHKLQGLGAGFIPGTLNTEIYDSIIKVGNDTAMEMSRRVAKEEGILAGISSGAAIYAAIQKAKELGKGKTVVTVLPSNGERYLSTPLYSFDD</sequence>
<organism>
    <name type="scientific">Staphylococcus aureus (strain N315)</name>
    <dbReference type="NCBI Taxonomy" id="158879"/>
    <lineage>
        <taxon>Bacteria</taxon>
        <taxon>Bacillati</taxon>
        <taxon>Bacillota</taxon>
        <taxon>Bacilli</taxon>
        <taxon>Bacillales</taxon>
        <taxon>Staphylococcaceae</taxon>
        <taxon>Staphylococcus</taxon>
    </lineage>
</organism>
<accession>P63871</accession>
<accession>Q99W90</accession>
<name>CYSK_STAAN</name>
<comment type="catalytic activity">
    <reaction>
        <text>O-acetyl-L-serine + hydrogen sulfide = L-cysteine + acetate</text>
        <dbReference type="Rhea" id="RHEA:14829"/>
        <dbReference type="ChEBI" id="CHEBI:29919"/>
        <dbReference type="ChEBI" id="CHEBI:30089"/>
        <dbReference type="ChEBI" id="CHEBI:35235"/>
        <dbReference type="ChEBI" id="CHEBI:58340"/>
        <dbReference type="EC" id="2.5.1.47"/>
    </reaction>
</comment>
<comment type="cofactor">
    <cofactor evidence="1">
        <name>pyridoxal 5'-phosphate</name>
        <dbReference type="ChEBI" id="CHEBI:597326"/>
    </cofactor>
</comment>
<comment type="pathway">
    <text>Amino-acid biosynthesis; L-cysteine biosynthesis; L-cysteine from L-serine: step 2/2.</text>
</comment>
<comment type="subunit">
    <text evidence="1">Homodimer.</text>
</comment>
<comment type="similarity">
    <text evidence="2">Belongs to the cysteine synthase/cystathionine beta-synthase family.</text>
</comment>
<proteinExistence type="evidence at protein level"/>
<reference key="1">
    <citation type="journal article" date="2001" name="Lancet">
        <title>Whole genome sequencing of meticillin-resistant Staphylococcus aureus.</title>
        <authorList>
            <person name="Kuroda M."/>
            <person name="Ohta T."/>
            <person name="Uchiyama I."/>
            <person name="Baba T."/>
            <person name="Yuzawa H."/>
            <person name="Kobayashi I."/>
            <person name="Cui L."/>
            <person name="Oguchi A."/>
            <person name="Aoki K."/>
            <person name="Nagai Y."/>
            <person name="Lian J.-Q."/>
            <person name="Ito T."/>
            <person name="Kanamori M."/>
            <person name="Matsumaru H."/>
            <person name="Maruyama A."/>
            <person name="Murakami H."/>
            <person name="Hosoyama A."/>
            <person name="Mizutani-Ui Y."/>
            <person name="Takahashi N.K."/>
            <person name="Sawano T."/>
            <person name="Inoue R."/>
            <person name="Kaito C."/>
            <person name="Sekimizu K."/>
            <person name="Hirakawa H."/>
            <person name="Kuhara S."/>
            <person name="Goto S."/>
            <person name="Yabuzaki J."/>
            <person name="Kanehisa M."/>
            <person name="Yamashita A."/>
            <person name="Oshima K."/>
            <person name="Furuya K."/>
            <person name="Yoshino C."/>
            <person name="Shiba T."/>
            <person name="Hattori M."/>
            <person name="Ogasawara N."/>
            <person name="Hayashi H."/>
            <person name="Hiramatsu K."/>
        </authorList>
    </citation>
    <scope>NUCLEOTIDE SEQUENCE [LARGE SCALE GENOMIC DNA]</scope>
    <source>
        <strain>N315</strain>
    </source>
</reference>
<reference key="2">
    <citation type="submission" date="2005-11" db="UniProtKB">
        <title>Shotgun proteomic analysis of total protein extract of S. aureus S30 versus N315.</title>
        <authorList>
            <person name="Stenz L."/>
        </authorList>
    </citation>
    <scope>IDENTIFICATION BY MASS SPECTROMETRY</scope>
</reference>
<reference key="3">
    <citation type="submission" date="2007-10" db="UniProtKB">
        <title>Shotgun proteomic analysis of total and membrane protein extracts of S. aureus strain N315.</title>
        <authorList>
            <person name="Vaezzadeh A.R."/>
            <person name="Deshusses J."/>
            <person name="Lescuyer P."/>
            <person name="Hochstrasser D.F."/>
        </authorList>
    </citation>
    <scope>IDENTIFICATION BY MASS SPECTROMETRY [LARGE SCALE ANALYSIS]</scope>
    <source>
        <strain>N315</strain>
    </source>
</reference>
<keyword id="KW-0028">Amino-acid biosynthesis</keyword>
<keyword id="KW-0198">Cysteine biosynthesis</keyword>
<keyword id="KW-0663">Pyridoxal phosphate</keyword>
<keyword id="KW-0808">Transferase</keyword>